<organism>
    <name type="scientific">Yersinia pseudotuberculosis serotype I (strain IP32953)</name>
    <dbReference type="NCBI Taxonomy" id="273123"/>
    <lineage>
        <taxon>Bacteria</taxon>
        <taxon>Pseudomonadati</taxon>
        <taxon>Pseudomonadota</taxon>
        <taxon>Gammaproteobacteria</taxon>
        <taxon>Enterobacterales</taxon>
        <taxon>Yersiniaceae</taxon>
        <taxon>Yersinia</taxon>
    </lineage>
</organism>
<feature type="chain" id="PRO_0000208547" description="Probable ECA polymerase">
    <location>
        <begin position="1"/>
        <end position="454"/>
    </location>
</feature>
<feature type="transmembrane region" description="Helical" evidence="1">
    <location>
        <begin position="3"/>
        <end position="23"/>
    </location>
</feature>
<feature type="transmembrane region" description="Helical" evidence="1">
    <location>
        <begin position="39"/>
        <end position="59"/>
    </location>
</feature>
<feature type="transmembrane region" description="Helical" evidence="1">
    <location>
        <begin position="61"/>
        <end position="81"/>
    </location>
</feature>
<feature type="transmembrane region" description="Helical" evidence="1">
    <location>
        <begin position="119"/>
        <end position="139"/>
    </location>
</feature>
<feature type="transmembrane region" description="Helical" evidence="1">
    <location>
        <begin position="154"/>
        <end position="174"/>
    </location>
</feature>
<feature type="transmembrane region" description="Helical" evidence="1">
    <location>
        <begin position="180"/>
        <end position="200"/>
    </location>
</feature>
<feature type="transmembrane region" description="Helical" evidence="1">
    <location>
        <begin position="201"/>
        <end position="221"/>
    </location>
</feature>
<feature type="transmembrane region" description="Helical" evidence="1">
    <location>
        <begin position="222"/>
        <end position="242"/>
    </location>
</feature>
<feature type="transmembrane region" description="Helical" evidence="1">
    <location>
        <begin position="340"/>
        <end position="360"/>
    </location>
</feature>
<feature type="transmembrane region" description="Helical" evidence="1">
    <location>
        <begin position="377"/>
        <end position="397"/>
    </location>
</feature>
<feature type="transmembrane region" description="Helical" evidence="1">
    <location>
        <begin position="409"/>
        <end position="429"/>
    </location>
</feature>
<dbReference type="EMBL" id="BX936398">
    <property type="protein sequence ID" value="CAH19418.1"/>
    <property type="molecule type" value="Genomic_DNA"/>
</dbReference>
<dbReference type="RefSeq" id="WP_002211978.1">
    <property type="nucleotide sequence ID" value="NZ_CP009712.1"/>
</dbReference>
<dbReference type="GeneID" id="57974847"/>
<dbReference type="KEGG" id="ypo:BZ17_2411"/>
<dbReference type="KEGG" id="yps:YPTB0178"/>
<dbReference type="PATRIC" id="fig|273123.14.peg.2532"/>
<dbReference type="UniPathway" id="UPA00566"/>
<dbReference type="Proteomes" id="UP000001011">
    <property type="component" value="Chromosome"/>
</dbReference>
<dbReference type="GO" id="GO:0005886">
    <property type="term" value="C:plasma membrane"/>
    <property type="evidence" value="ECO:0007669"/>
    <property type="project" value="UniProtKB-SubCell"/>
</dbReference>
<dbReference type="GO" id="GO:0009246">
    <property type="term" value="P:enterobacterial common antigen biosynthetic process"/>
    <property type="evidence" value="ECO:0007669"/>
    <property type="project" value="UniProtKB-UniRule"/>
</dbReference>
<dbReference type="HAMAP" id="MF_01003">
    <property type="entry name" value="WzyE"/>
    <property type="match status" value="1"/>
</dbReference>
<dbReference type="InterPro" id="IPR010691">
    <property type="entry name" value="WzyE"/>
</dbReference>
<dbReference type="NCBIfam" id="NF002820">
    <property type="entry name" value="PRK02975.1"/>
    <property type="match status" value="1"/>
</dbReference>
<dbReference type="Pfam" id="PF06899">
    <property type="entry name" value="WzyE"/>
    <property type="match status" value="1"/>
</dbReference>
<name>WZYE_YERPS</name>
<comment type="function">
    <text evidence="1">Probably involved in the polymerization of enterobacterial common antigen (ECA) trisaccharide repeat units.</text>
</comment>
<comment type="pathway">
    <text evidence="1">Bacterial outer membrane biogenesis; enterobacterial common antigen biosynthesis.</text>
</comment>
<comment type="subunit">
    <text evidence="1">Probably part of a complex composed of WzxE, WzyE and WzzE.</text>
</comment>
<comment type="subcellular location">
    <subcellularLocation>
        <location evidence="1">Cell inner membrane</location>
        <topology evidence="1">Multi-pass membrane protein</topology>
    </subcellularLocation>
</comment>
<comment type="similarity">
    <text evidence="1">Belongs to the WzyE family.</text>
</comment>
<sequence length="454" mass="51653">MTLGQFGGLFCIYLIAVIFILTLTYQEFRRVKFNFNVLFSMLYLLTFYFGFPLTCMLVFQFGVAVVPVEYLLYAMLSATAFYGIYYVTYKTRLRQPRSQPRTPIFTMNRVETNLTWVLLALVAVGTVGIFFMQNGFLLFKLDSYSKIFSSDVSGVALKRFFYFFIPAMLVVYFLKQDRRAWFFFLASTVAFGILTYVIVGGTRANIIIAFSLFLFIGIVRGWITLWMLAAAGVFGIVGMFWLALKRYGLDVNGAEAFYTFLYLTRDTFSPWENLGLLLQNYDKIDFQGLAPIVRDFYVFIPSALWPERPDLVLNTANYFTWDVLDNHSGLAISPTLIGSLVVMGGVLFIPLGAIVVGLIIKWFDWLYEQGKAESNRYKAAILQSFCFGAVFNIIVLAREGLDSFVSRVVFFCVIFGACLVLAKLLYWLFDTAGLIKRQGIKSNRLSTPNAGNQL</sequence>
<evidence type="ECO:0000255" key="1">
    <source>
        <dbReference type="HAMAP-Rule" id="MF_01003"/>
    </source>
</evidence>
<reference key="1">
    <citation type="journal article" date="2004" name="Proc. Natl. Acad. Sci. U.S.A.">
        <title>Insights into the evolution of Yersinia pestis through whole-genome comparison with Yersinia pseudotuberculosis.</title>
        <authorList>
            <person name="Chain P.S.G."/>
            <person name="Carniel E."/>
            <person name="Larimer F.W."/>
            <person name="Lamerdin J."/>
            <person name="Stoutland P.O."/>
            <person name="Regala W.M."/>
            <person name="Georgescu A.M."/>
            <person name="Vergez L.M."/>
            <person name="Land M.L."/>
            <person name="Motin V.L."/>
            <person name="Brubaker R.R."/>
            <person name="Fowler J."/>
            <person name="Hinnebusch J."/>
            <person name="Marceau M."/>
            <person name="Medigue C."/>
            <person name="Simonet M."/>
            <person name="Chenal-Francisque V."/>
            <person name="Souza B."/>
            <person name="Dacheux D."/>
            <person name="Elliott J.M."/>
            <person name="Derbise A."/>
            <person name="Hauser L.J."/>
            <person name="Garcia E."/>
        </authorList>
    </citation>
    <scope>NUCLEOTIDE SEQUENCE [LARGE SCALE GENOMIC DNA]</scope>
    <source>
        <strain>IP32953</strain>
    </source>
</reference>
<protein>
    <recommendedName>
        <fullName evidence="1">Probable ECA polymerase</fullName>
    </recommendedName>
</protein>
<gene>
    <name evidence="1" type="primary">wzyE</name>
    <name type="ordered locus">YPTB0178</name>
</gene>
<keyword id="KW-0997">Cell inner membrane</keyword>
<keyword id="KW-1003">Cell membrane</keyword>
<keyword id="KW-0472">Membrane</keyword>
<keyword id="KW-0812">Transmembrane</keyword>
<keyword id="KW-1133">Transmembrane helix</keyword>
<proteinExistence type="inferred from homology"/>
<accession>Q66G06</accession>